<reference key="1">
    <citation type="journal article" date="2005" name="Science">
        <title>The transcriptional landscape of the mammalian genome.</title>
        <authorList>
            <person name="Carninci P."/>
            <person name="Kasukawa T."/>
            <person name="Katayama S."/>
            <person name="Gough J."/>
            <person name="Frith M.C."/>
            <person name="Maeda N."/>
            <person name="Oyama R."/>
            <person name="Ravasi T."/>
            <person name="Lenhard B."/>
            <person name="Wells C."/>
            <person name="Kodzius R."/>
            <person name="Shimokawa K."/>
            <person name="Bajic V.B."/>
            <person name="Brenner S.E."/>
            <person name="Batalov S."/>
            <person name="Forrest A.R."/>
            <person name="Zavolan M."/>
            <person name="Davis M.J."/>
            <person name="Wilming L.G."/>
            <person name="Aidinis V."/>
            <person name="Allen J.E."/>
            <person name="Ambesi-Impiombato A."/>
            <person name="Apweiler R."/>
            <person name="Aturaliya R.N."/>
            <person name="Bailey T.L."/>
            <person name="Bansal M."/>
            <person name="Baxter L."/>
            <person name="Beisel K.W."/>
            <person name="Bersano T."/>
            <person name="Bono H."/>
            <person name="Chalk A.M."/>
            <person name="Chiu K.P."/>
            <person name="Choudhary V."/>
            <person name="Christoffels A."/>
            <person name="Clutterbuck D.R."/>
            <person name="Crowe M.L."/>
            <person name="Dalla E."/>
            <person name="Dalrymple B.P."/>
            <person name="de Bono B."/>
            <person name="Della Gatta G."/>
            <person name="di Bernardo D."/>
            <person name="Down T."/>
            <person name="Engstrom P."/>
            <person name="Fagiolini M."/>
            <person name="Faulkner G."/>
            <person name="Fletcher C.F."/>
            <person name="Fukushima T."/>
            <person name="Furuno M."/>
            <person name="Futaki S."/>
            <person name="Gariboldi M."/>
            <person name="Georgii-Hemming P."/>
            <person name="Gingeras T.R."/>
            <person name="Gojobori T."/>
            <person name="Green R.E."/>
            <person name="Gustincich S."/>
            <person name="Harbers M."/>
            <person name="Hayashi Y."/>
            <person name="Hensch T.K."/>
            <person name="Hirokawa N."/>
            <person name="Hill D."/>
            <person name="Huminiecki L."/>
            <person name="Iacono M."/>
            <person name="Ikeo K."/>
            <person name="Iwama A."/>
            <person name="Ishikawa T."/>
            <person name="Jakt M."/>
            <person name="Kanapin A."/>
            <person name="Katoh M."/>
            <person name="Kawasawa Y."/>
            <person name="Kelso J."/>
            <person name="Kitamura H."/>
            <person name="Kitano H."/>
            <person name="Kollias G."/>
            <person name="Krishnan S.P."/>
            <person name="Kruger A."/>
            <person name="Kummerfeld S.K."/>
            <person name="Kurochkin I.V."/>
            <person name="Lareau L.F."/>
            <person name="Lazarevic D."/>
            <person name="Lipovich L."/>
            <person name="Liu J."/>
            <person name="Liuni S."/>
            <person name="McWilliam S."/>
            <person name="Madan Babu M."/>
            <person name="Madera M."/>
            <person name="Marchionni L."/>
            <person name="Matsuda H."/>
            <person name="Matsuzawa S."/>
            <person name="Miki H."/>
            <person name="Mignone F."/>
            <person name="Miyake S."/>
            <person name="Morris K."/>
            <person name="Mottagui-Tabar S."/>
            <person name="Mulder N."/>
            <person name="Nakano N."/>
            <person name="Nakauchi H."/>
            <person name="Ng P."/>
            <person name="Nilsson R."/>
            <person name="Nishiguchi S."/>
            <person name="Nishikawa S."/>
            <person name="Nori F."/>
            <person name="Ohara O."/>
            <person name="Okazaki Y."/>
            <person name="Orlando V."/>
            <person name="Pang K.C."/>
            <person name="Pavan W.J."/>
            <person name="Pavesi G."/>
            <person name="Pesole G."/>
            <person name="Petrovsky N."/>
            <person name="Piazza S."/>
            <person name="Reed J."/>
            <person name="Reid J.F."/>
            <person name="Ring B.Z."/>
            <person name="Ringwald M."/>
            <person name="Rost B."/>
            <person name="Ruan Y."/>
            <person name="Salzberg S.L."/>
            <person name="Sandelin A."/>
            <person name="Schneider C."/>
            <person name="Schoenbach C."/>
            <person name="Sekiguchi K."/>
            <person name="Semple C.A."/>
            <person name="Seno S."/>
            <person name="Sessa L."/>
            <person name="Sheng Y."/>
            <person name="Shibata Y."/>
            <person name="Shimada H."/>
            <person name="Shimada K."/>
            <person name="Silva D."/>
            <person name="Sinclair B."/>
            <person name="Sperling S."/>
            <person name="Stupka E."/>
            <person name="Sugiura K."/>
            <person name="Sultana R."/>
            <person name="Takenaka Y."/>
            <person name="Taki K."/>
            <person name="Tammoja K."/>
            <person name="Tan S.L."/>
            <person name="Tang S."/>
            <person name="Taylor M.S."/>
            <person name="Tegner J."/>
            <person name="Teichmann S.A."/>
            <person name="Ueda H.R."/>
            <person name="van Nimwegen E."/>
            <person name="Verardo R."/>
            <person name="Wei C.L."/>
            <person name="Yagi K."/>
            <person name="Yamanishi H."/>
            <person name="Zabarovsky E."/>
            <person name="Zhu S."/>
            <person name="Zimmer A."/>
            <person name="Hide W."/>
            <person name="Bult C."/>
            <person name="Grimmond S.M."/>
            <person name="Teasdale R.D."/>
            <person name="Liu E.T."/>
            <person name="Brusic V."/>
            <person name="Quackenbush J."/>
            <person name="Wahlestedt C."/>
            <person name="Mattick J.S."/>
            <person name="Hume D.A."/>
            <person name="Kai C."/>
            <person name="Sasaki D."/>
            <person name="Tomaru Y."/>
            <person name="Fukuda S."/>
            <person name="Kanamori-Katayama M."/>
            <person name="Suzuki M."/>
            <person name="Aoki J."/>
            <person name="Arakawa T."/>
            <person name="Iida J."/>
            <person name="Imamura K."/>
            <person name="Itoh M."/>
            <person name="Kato T."/>
            <person name="Kawaji H."/>
            <person name="Kawagashira N."/>
            <person name="Kawashima T."/>
            <person name="Kojima M."/>
            <person name="Kondo S."/>
            <person name="Konno H."/>
            <person name="Nakano K."/>
            <person name="Ninomiya N."/>
            <person name="Nishio T."/>
            <person name="Okada M."/>
            <person name="Plessy C."/>
            <person name="Shibata K."/>
            <person name="Shiraki T."/>
            <person name="Suzuki S."/>
            <person name="Tagami M."/>
            <person name="Waki K."/>
            <person name="Watahiki A."/>
            <person name="Okamura-Oho Y."/>
            <person name="Suzuki H."/>
            <person name="Kawai J."/>
            <person name="Hayashizaki Y."/>
        </authorList>
    </citation>
    <scope>NUCLEOTIDE SEQUENCE [LARGE SCALE MRNA]</scope>
    <source>
        <strain>C57BL/6J</strain>
        <tissue>Cerebellum</tissue>
        <tissue>Head</tissue>
        <tissue>Spinal cord</tissue>
    </source>
</reference>
<reference key="2">
    <citation type="journal article" date="2008" name="BMC Bioinformatics">
        <title>Predicted mouse peroxisome-targeted proteins and their actual subcellular locations.</title>
        <authorList>
            <person name="Mizuno Y."/>
            <person name="Kurochkin I.V."/>
            <person name="Herberth M."/>
            <person name="Okazaki Y."/>
            <person name="Schoenbach C."/>
        </authorList>
    </citation>
    <scope>SUBCELLULAR LOCATION</scope>
    <scope>INDUCTION</scope>
</reference>
<reference key="3">
    <citation type="journal article" date="2010" name="Cell">
        <title>A tissue-specific atlas of mouse protein phosphorylation and expression.</title>
        <authorList>
            <person name="Huttlin E.L."/>
            <person name="Jedrychowski M.P."/>
            <person name="Elias J.E."/>
            <person name="Goswami T."/>
            <person name="Rad R."/>
            <person name="Beausoleil S.A."/>
            <person name="Villen J."/>
            <person name="Haas W."/>
            <person name="Sowa M.E."/>
            <person name="Gygi S.P."/>
        </authorList>
    </citation>
    <scope>IDENTIFICATION BY MASS SPECTROMETRY [LARGE SCALE ANALYSIS]</scope>
    <source>
        <tissue>Brain</tissue>
        <tissue>Brown adipose tissue</tissue>
        <tissue>Heart</tissue>
        <tissue>Kidney</tissue>
        <tissue>Liver</tissue>
        <tissue>Lung</tissue>
        <tissue>Pancreas</tissue>
        <tissue>Spleen</tissue>
        <tissue>Testis</tissue>
    </source>
</reference>
<reference key="4">
    <citation type="journal article" date="2013" name="J. Lipid Res.">
        <title>Prostaglandin reductase-3 negatively modulates adipogenesis through regulation of PPARgamma activity.</title>
        <authorList>
            <person name="Yu Y.H."/>
            <person name="Chang Y.C."/>
            <person name="Su T.H."/>
            <person name="Nong J.Y."/>
            <person name="Li C.C."/>
            <person name="Chuang L.M."/>
        </authorList>
    </citation>
    <scope>TISSUE SPECIFICITY</scope>
    <scope>CATALYTIC ACTIVITY</scope>
    <scope>BIOPHYSICOCHEMICAL PROPERTIES</scope>
    <scope>INDUCTION</scope>
    <scope>FUNCTION</scope>
</reference>
<reference key="5">
    <citation type="journal article" date="2013" name="Proc. Natl. Acad. Sci. U.S.A.">
        <title>Label-free quantitative proteomics of the lysine acetylome in mitochondria identifies substrates of SIRT3 in metabolic pathways.</title>
        <authorList>
            <person name="Rardin M.J."/>
            <person name="Newman J.C."/>
            <person name="Held J.M."/>
            <person name="Cusack M.P."/>
            <person name="Sorensen D.J."/>
            <person name="Li B."/>
            <person name="Schilling B."/>
            <person name="Mooney S.D."/>
            <person name="Kahn C.R."/>
            <person name="Verdin E."/>
            <person name="Gibson B.W."/>
        </authorList>
    </citation>
    <scope>ACETYLATION [LARGE SCALE ANALYSIS] AT LYS-35</scope>
    <scope>IDENTIFICATION BY MASS SPECTROMETRY [LARGE SCALE ANALYSIS]</scope>
    <source>
        <tissue>Liver</tissue>
    </source>
</reference>
<name>PTGR3_MOUSE</name>
<dbReference type="EC" id="1.3.1.48" evidence="3"/>
<dbReference type="EMBL" id="AK047559">
    <property type="protein sequence ID" value="BAC33086.1"/>
    <property type="molecule type" value="mRNA"/>
</dbReference>
<dbReference type="EMBL" id="AK081988">
    <property type="protein sequence ID" value="BAC38389.1"/>
    <property type="molecule type" value="mRNA"/>
</dbReference>
<dbReference type="EMBL" id="AK083082">
    <property type="protein sequence ID" value="BAC38754.1"/>
    <property type="molecule type" value="mRNA"/>
</dbReference>
<dbReference type="CCDS" id="CCDS29381.1"/>
<dbReference type="RefSeq" id="NP_666202.2">
    <property type="nucleotide sequence ID" value="NM_146090.5"/>
</dbReference>
<dbReference type="SMR" id="Q8BGC4"/>
<dbReference type="BioGRID" id="230427">
    <property type="interactions" value="13"/>
</dbReference>
<dbReference type="FunCoup" id="Q8BGC4">
    <property type="interactions" value="1706"/>
</dbReference>
<dbReference type="STRING" id="10090.ENSMUSP00000052544"/>
<dbReference type="SwissLipids" id="SLP:000001624"/>
<dbReference type="GlyGen" id="Q8BGC4">
    <property type="glycosylation" value="1 site, 1 O-linked glycan (1 site)"/>
</dbReference>
<dbReference type="iPTMnet" id="Q8BGC4"/>
<dbReference type="PhosphoSitePlus" id="Q8BGC4"/>
<dbReference type="SwissPalm" id="Q8BGC4"/>
<dbReference type="jPOST" id="Q8BGC4"/>
<dbReference type="PaxDb" id="10090-ENSMUSP00000052544"/>
<dbReference type="ProteomicsDB" id="301871"/>
<dbReference type="Pumba" id="Q8BGC4"/>
<dbReference type="Antibodypedia" id="10355">
    <property type="antibodies" value="142 antibodies from 26 providers"/>
</dbReference>
<dbReference type="DNASU" id="225791"/>
<dbReference type="Ensembl" id="ENSMUST00000060223.4">
    <property type="protein sequence ID" value="ENSMUSP00000052544.3"/>
    <property type="gene ID" value="ENSMUSG00000049090.4"/>
</dbReference>
<dbReference type="GeneID" id="225791"/>
<dbReference type="KEGG" id="mmu:225791"/>
<dbReference type="UCSC" id="uc008fun.1">
    <property type="organism name" value="mouse"/>
</dbReference>
<dbReference type="AGR" id="MGI:2444835"/>
<dbReference type="CTD" id="284273"/>
<dbReference type="MGI" id="MGI:2444835">
    <property type="gene designation" value="Ptgr3"/>
</dbReference>
<dbReference type="VEuPathDB" id="HostDB:ENSMUSG00000049090"/>
<dbReference type="eggNOG" id="KOG1196">
    <property type="taxonomic scope" value="Eukaryota"/>
</dbReference>
<dbReference type="GeneTree" id="ENSGT00920000149172"/>
<dbReference type="HOGENOM" id="CLU_026673_3_1_1"/>
<dbReference type="InParanoid" id="Q8BGC4"/>
<dbReference type="OMA" id="VDMSYSR"/>
<dbReference type="OrthoDB" id="9992527at2759"/>
<dbReference type="PhylomeDB" id="Q8BGC4"/>
<dbReference type="TreeFam" id="TF328691"/>
<dbReference type="BioGRID-ORCS" id="225791">
    <property type="hits" value="2 hits in 77 CRISPR screens"/>
</dbReference>
<dbReference type="ChiTaRS" id="Zadh2">
    <property type="organism name" value="mouse"/>
</dbReference>
<dbReference type="PRO" id="PR:Q8BGC4"/>
<dbReference type="Proteomes" id="UP000000589">
    <property type="component" value="Chromosome 18"/>
</dbReference>
<dbReference type="RNAct" id="Q8BGC4">
    <property type="molecule type" value="protein"/>
</dbReference>
<dbReference type="Bgee" id="ENSMUSG00000049090">
    <property type="expression patterns" value="Expressed in interventricular septum and 245 other cell types or tissues"/>
</dbReference>
<dbReference type="ExpressionAtlas" id="Q8BGC4">
    <property type="expression patterns" value="baseline and differential"/>
</dbReference>
<dbReference type="GO" id="GO:0005739">
    <property type="term" value="C:mitochondrion"/>
    <property type="evidence" value="ECO:0007005"/>
    <property type="project" value="MGI"/>
</dbReference>
<dbReference type="GO" id="GO:0005777">
    <property type="term" value="C:peroxisome"/>
    <property type="evidence" value="ECO:0000314"/>
    <property type="project" value="UniProtKB"/>
</dbReference>
<dbReference type="GO" id="GO:0047522">
    <property type="term" value="F:15-oxoprostaglandin 13-oxidase [NAD(P)+] activity"/>
    <property type="evidence" value="ECO:0000315"/>
    <property type="project" value="UniProtKB"/>
</dbReference>
<dbReference type="GO" id="GO:0008270">
    <property type="term" value="F:zinc ion binding"/>
    <property type="evidence" value="ECO:0007669"/>
    <property type="project" value="InterPro"/>
</dbReference>
<dbReference type="GO" id="GO:0006629">
    <property type="term" value="P:lipid metabolic process"/>
    <property type="evidence" value="ECO:0007669"/>
    <property type="project" value="UniProtKB-KW"/>
</dbReference>
<dbReference type="GO" id="GO:0045599">
    <property type="term" value="P:negative regulation of fat cell differentiation"/>
    <property type="evidence" value="ECO:0000315"/>
    <property type="project" value="UniProtKB"/>
</dbReference>
<dbReference type="CDD" id="cd08250">
    <property type="entry name" value="Mgc45594_like"/>
    <property type="match status" value="1"/>
</dbReference>
<dbReference type="FunFam" id="3.40.50.720:FF:000121">
    <property type="entry name" value="Prostaglandin reductase 2"/>
    <property type="match status" value="1"/>
</dbReference>
<dbReference type="FunFam" id="3.90.180.10:FF:000023">
    <property type="entry name" value="Prostaglandin reductase 3 isoform 1"/>
    <property type="match status" value="1"/>
</dbReference>
<dbReference type="Gene3D" id="3.90.180.10">
    <property type="entry name" value="Medium-chain alcohol dehydrogenases, catalytic domain"/>
    <property type="match status" value="1"/>
</dbReference>
<dbReference type="Gene3D" id="3.40.50.720">
    <property type="entry name" value="NAD(P)-binding Rossmann-like Domain"/>
    <property type="match status" value="1"/>
</dbReference>
<dbReference type="InterPro" id="IPR013149">
    <property type="entry name" value="ADH-like_C"/>
</dbReference>
<dbReference type="InterPro" id="IPR013154">
    <property type="entry name" value="ADH-like_N"/>
</dbReference>
<dbReference type="InterPro" id="IPR011032">
    <property type="entry name" value="GroES-like_sf"/>
</dbReference>
<dbReference type="InterPro" id="IPR036291">
    <property type="entry name" value="NAD(P)-bd_dom_sf"/>
</dbReference>
<dbReference type="InterPro" id="IPR020843">
    <property type="entry name" value="PKS_ER"/>
</dbReference>
<dbReference type="InterPro" id="IPR002364">
    <property type="entry name" value="Quin_OxRdtase/zeta-crystal_CS"/>
</dbReference>
<dbReference type="InterPro" id="IPR051397">
    <property type="entry name" value="Zn-ADH-like_protein"/>
</dbReference>
<dbReference type="PANTHER" id="PTHR43677:SF3">
    <property type="entry name" value="PROSTAGLANDIN REDUCTASE 3"/>
    <property type="match status" value="1"/>
</dbReference>
<dbReference type="PANTHER" id="PTHR43677">
    <property type="entry name" value="SHORT-CHAIN DEHYDROGENASE/REDUCTASE"/>
    <property type="match status" value="1"/>
</dbReference>
<dbReference type="Pfam" id="PF08240">
    <property type="entry name" value="ADH_N"/>
    <property type="match status" value="1"/>
</dbReference>
<dbReference type="Pfam" id="PF00107">
    <property type="entry name" value="ADH_zinc_N"/>
    <property type="match status" value="1"/>
</dbReference>
<dbReference type="SMART" id="SM00829">
    <property type="entry name" value="PKS_ER"/>
    <property type="match status" value="1"/>
</dbReference>
<dbReference type="SUPFAM" id="SSF50129">
    <property type="entry name" value="GroES-like"/>
    <property type="match status" value="1"/>
</dbReference>
<dbReference type="SUPFAM" id="SSF51735">
    <property type="entry name" value="NAD(P)-binding Rossmann-fold domains"/>
    <property type="match status" value="1"/>
</dbReference>
<dbReference type="PROSITE" id="PS01162">
    <property type="entry name" value="QOR_ZETA_CRYSTAL"/>
    <property type="match status" value="1"/>
</dbReference>
<comment type="function">
    <text evidence="3">Functions as 15-oxo-prostaglandin 13-reductase and acts on 15-keto-PGE1, 15-keto-PGE2, 15-keto-PGE1-alpha and 15-keto-PGE2-alpha with highest efficiency towards 15-keto-PGE2-alpha. Overexpression represses transcriptional activity of PPARG and inhibits adipocyte differentiation.</text>
</comment>
<comment type="catalytic activity">
    <reaction evidence="3">
        <text>13,14-dihydro-15-oxo-prostaglandin E2 + NADP(+) = 15-oxoprostaglandin E2 + NADPH + H(+)</text>
        <dbReference type="Rhea" id="RHEA:11912"/>
        <dbReference type="ChEBI" id="CHEBI:15378"/>
        <dbReference type="ChEBI" id="CHEBI:57400"/>
        <dbReference type="ChEBI" id="CHEBI:57402"/>
        <dbReference type="ChEBI" id="CHEBI:57783"/>
        <dbReference type="ChEBI" id="CHEBI:58349"/>
        <dbReference type="EC" id="1.3.1.48"/>
    </reaction>
</comment>
<comment type="catalytic activity">
    <reaction evidence="3">
        <text>13,14-dihydro-15-oxo-prostaglandin E1 + NADP(+) = 15-oxoprostaglandin E1 + NADPH + H(+)</text>
        <dbReference type="Rhea" id="RHEA:50584"/>
        <dbReference type="ChEBI" id="CHEBI:15378"/>
        <dbReference type="ChEBI" id="CHEBI:57401"/>
        <dbReference type="ChEBI" id="CHEBI:57783"/>
        <dbReference type="ChEBI" id="CHEBI:58349"/>
        <dbReference type="ChEBI" id="CHEBI:133408"/>
    </reaction>
</comment>
<comment type="catalytic activity">
    <reaction evidence="3">
        <text>13,14-dihydro-15-oxo-PGF2alpha + NADP(+) = 15-oxoprostaglandin F2alpha + NADPH + H(+)</text>
        <dbReference type="Rhea" id="RHEA:50588"/>
        <dbReference type="ChEBI" id="CHEBI:15378"/>
        <dbReference type="ChEBI" id="CHEBI:57783"/>
        <dbReference type="ChEBI" id="CHEBI:58349"/>
        <dbReference type="ChEBI" id="CHEBI:133374"/>
        <dbReference type="ChEBI" id="CHEBI:133409"/>
    </reaction>
</comment>
<comment type="catalytic activity">
    <reaction evidence="3">
        <text>13,14-dihydro-15-oxo-prostaglandin F1alpha + NADP(+) = 15-oxoprostaglandin F1alpha + NADPH + H(+)</text>
        <dbReference type="Rhea" id="RHEA:50592"/>
        <dbReference type="ChEBI" id="CHEBI:15378"/>
        <dbReference type="ChEBI" id="CHEBI:57783"/>
        <dbReference type="ChEBI" id="CHEBI:58349"/>
        <dbReference type="ChEBI" id="CHEBI:79072"/>
        <dbReference type="ChEBI" id="CHEBI:133411"/>
    </reaction>
</comment>
<comment type="biophysicochemical properties">
    <kinetics>
        <KM evidence="3">55 uM for 15-keto-PGE2</KM>
        <KM evidence="3">75.1 uM for 15-keto-PGE1</KM>
        <KM evidence="3">42.5 uM for 15-keto-PGF2-alpha</KM>
        <KM evidence="3">53.5 uM for 15-keto-PGF1-alpha</KM>
        <Vmax evidence="3">215.4 nmol/min/mg enzyme with 15-keto-PGE2 as substrate</Vmax>
        <Vmax evidence="3">109.6 nmol/min/mg enzyme with 15-keto-PGE1 as substrate</Vmax>
        <Vmax evidence="3">303.3 nmol/min/mg enzyme with 15-keto-PGF2-alpha as substrate</Vmax>
        <Vmax evidence="3">286.2 nmol/min/mg enzyme with 15-keto-PGF1-alpha as substrate</Vmax>
        <text evidence="3">kcat is 8.6 min(-1) for 15-keto-PGE2, 4.37 min(-1) for 15-keto-PGE1, 11.55 for min(-1) for 15-keto-PGF2-alpha, 11.45 min(-1) for 15-keto-PGF1-alpha.</text>
    </kinetics>
</comment>
<comment type="subcellular location">
    <subcellularLocation>
        <location evidence="2">Peroxisome</location>
    </subcellularLocation>
</comment>
<comment type="tissue specificity">
    <text evidence="3">Widely expressed.</text>
</comment>
<comment type="induction">
    <text evidence="2 3">Up-regulated by high fat diet (PubMed:19091015). Down-regulated in white adipose tissue in ob/on mice (PubMed:23821743).</text>
</comment>
<comment type="similarity">
    <text evidence="5">Belongs to the zinc-containing alcohol dehydrogenase family. Quinone oxidoreductase subfamily.</text>
</comment>
<organism>
    <name type="scientific">Mus musculus</name>
    <name type="common">Mouse</name>
    <dbReference type="NCBI Taxonomy" id="10090"/>
    <lineage>
        <taxon>Eukaryota</taxon>
        <taxon>Metazoa</taxon>
        <taxon>Chordata</taxon>
        <taxon>Craniata</taxon>
        <taxon>Vertebrata</taxon>
        <taxon>Euteleostomi</taxon>
        <taxon>Mammalia</taxon>
        <taxon>Eutheria</taxon>
        <taxon>Euarchontoglires</taxon>
        <taxon>Glires</taxon>
        <taxon>Rodentia</taxon>
        <taxon>Myomorpha</taxon>
        <taxon>Muroidea</taxon>
        <taxon>Muridae</taxon>
        <taxon>Murinae</taxon>
        <taxon>Mus</taxon>
        <taxon>Mus</taxon>
    </lineage>
</organism>
<sequence length="377" mass="40529">MLRLAAAGARAIVDMSYARHFLDFQGSAIPRTMQKLVVTRLSPNFHEAVTLRRDCPVPLPGDGDLLVRNRFVGINASDINYSAGRYDPSLKPPFDIGFEGIGEVVALGLSASARYTVGQAVAYMAPGSFAEYTVVPASIAIPMPSVKPEYLTMLVSGTTAYLSLEELGELSEGKKVLVTAAAGGTGQFAVQLSKIAKCHVIGTCSSDEKAAFLKSIGCDRPINYRTEPVETVLKQEYPEGVDVVYESVGGAMFDLAVDALATKGRLIVIGFISGYQSPTGLSPIKAGVLPTKLLKKSASLRGFFLNHYFSKYQAAMERLLELYARGDLVCEVDLGHLAPDGRFIGLESVFQAVDYMYTGKNTGKLVVELPHPVSSKL</sequence>
<gene>
    <name evidence="4" type="primary">Ptgr3</name>
    <name evidence="6" type="synonym">Zadh2</name>
</gene>
<evidence type="ECO:0000250" key="1">
    <source>
        <dbReference type="UniProtKB" id="Q8N4Q0"/>
    </source>
</evidence>
<evidence type="ECO:0000269" key="2">
    <source>
    </source>
</evidence>
<evidence type="ECO:0000269" key="3">
    <source>
    </source>
</evidence>
<evidence type="ECO:0000303" key="4">
    <source>
    </source>
</evidence>
<evidence type="ECO:0000305" key="5"/>
<evidence type="ECO:0000312" key="6">
    <source>
        <dbReference type="MGI" id="MGI:2444835"/>
    </source>
</evidence>
<evidence type="ECO:0007744" key="7">
    <source>
    </source>
</evidence>
<protein>
    <recommendedName>
        <fullName evidence="4">Prostaglandin reductase-3</fullName>
        <shortName>PTGR-3</shortName>
        <ecNumber evidence="3">1.3.1.48</ecNumber>
    </recommendedName>
    <alternativeName>
        <fullName>15-oxoprostaglandin 13-reductase</fullName>
    </alternativeName>
    <alternativeName>
        <fullName>Zinc-binding alcohol dehydrogenase domain-containing protein 2</fullName>
    </alternativeName>
</protein>
<proteinExistence type="evidence at protein level"/>
<accession>Q8BGC4</accession>
<feature type="chain" id="PRO_0000223466" description="Prostaglandin reductase-3">
    <location>
        <begin position="1"/>
        <end position="377"/>
    </location>
</feature>
<feature type="binding site" evidence="1">
    <location>
        <position position="185"/>
    </location>
    <ligand>
        <name>NADP(+)</name>
        <dbReference type="ChEBI" id="CHEBI:58349"/>
    </ligand>
</feature>
<feature type="binding site" evidence="1">
    <location>
        <position position="205"/>
    </location>
    <ligand>
        <name>NADP(+)</name>
        <dbReference type="ChEBI" id="CHEBI:58349"/>
    </ligand>
</feature>
<feature type="binding site" evidence="1">
    <location>
        <position position="209"/>
    </location>
    <ligand>
        <name>NADP(+)</name>
        <dbReference type="ChEBI" id="CHEBI:58349"/>
    </ligand>
</feature>
<feature type="binding site" evidence="1">
    <location>
        <position position="224"/>
    </location>
    <ligand>
        <name>NADP(+)</name>
        <dbReference type="ChEBI" id="CHEBI:58349"/>
    </ligand>
</feature>
<feature type="binding site" evidence="1">
    <location>
        <position position="247"/>
    </location>
    <ligand>
        <name>NADP(+)</name>
        <dbReference type="ChEBI" id="CHEBI:58349"/>
    </ligand>
</feature>
<feature type="binding site" evidence="1">
    <location>
        <position position="269"/>
    </location>
    <ligand>
        <name>NADP(+)</name>
        <dbReference type="ChEBI" id="CHEBI:58349"/>
    </ligand>
</feature>
<feature type="binding site" evidence="1">
    <location>
        <position position="275"/>
    </location>
    <ligand>
        <name>NADP(+)</name>
        <dbReference type="ChEBI" id="CHEBI:58349"/>
    </ligand>
</feature>
<feature type="binding site" evidence="1">
    <location>
        <begin position="303"/>
        <end position="305"/>
    </location>
    <ligand>
        <name>NADP(+)</name>
        <dbReference type="ChEBI" id="CHEBI:58349"/>
    </ligand>
</feature>
<feature type="binding site" evidence="1">
    <location>
        <position position="361"/>
    </location>
    <ligand>
        <name>NADP(+)</name>
        <dbReference type="ChEBI" id="CHEBI:58349"/>
    </ligand>
</feature>
<feature type="modified residue" description="N6-acetyllysine" evidence="7">
    <location>
        <position position="35"/>
    </location>
</feature>
<feature type="modified residue" description="Phosphoserine" evidence="1">
    <location>
        <position position="299"/>
    </location>
</feature>
<keyword id="KW-0007">Acetylation</keyword>
<keyword id="KW-0443">Lipid metabolism</keyword>
<keyword id="KW-0521">NADP</keyword>
<keyword id="KW-0560">Oxidoreductase</keyword>
<keyword id="KW-0576">Peroxisome</keyword>
<keyword id="KW-0597">Phosphoprotein</keyword>
<keyword id="KW-1185">Reference proteome</keyword>